<feature type="chain" id="PRO_0000224471" description="Valine--tRNA ligase">
    <location>
        <begin position="1"/>
        <end position="880"/>
    </location>
</feature>
<feature type="coiled-coil region" evidence="1">
    <location>
        <begin position="815"/>
        <end position="854"/>
    </location>
</feature>
<feature type="short sequence motif" description="'HIGH' region">
    <location>
        <begin position="51"/>
        <end position="61"/>
    </location>
</feature>
<feature type="short sequence motif" description="'KMSKS' region">
    <location>
        <begin position="529"/>
        <end position="533"/>
    </location>
</feature>
<feature type="binding site" evidence="1">
    <location>
        <position position="532"/>
    </location>
    <ligand>
        <name>ATP</name>
        <dbReference type="ChEBI" id="CHEBI:30616"/>
    </ligand>
</feature>
<dbReference type="EC" id="6.1.1.9" evidence="1"/>
<dbReference type="EMBL" id="CP000027">
    <property type="protein sequence ID" value="AAW40282.1"/>
    <property type="molecule type" value="Genomic_DNA"/>
</dbReference>
<dbReference type="RefSeq" id="WP_010936207.1">
    <property type="nucleotide sequence ID" value="NC_002936.3"/>
</dbReference>
<dbReference type="SMR" id="Q3Z9C5"/>
<dbReference type="FunCoup" id="Q3Z9C5">
    <property type="interactions" value="344"/>
</dbReference>
<dbReference type="STRING" id="243164.DET0430"/>
<dbReference type="GeneID" id="3230246"/>
<dbReference type="KEGG" id="det:DET0430"/>
<dbReference type="PATRIC" id="fig|243164.10.peg.408"/>
<dbReference type="eggNOG" id="COG0525">
    <property type="taxonomic scope" value="Bacteria"/>
</dbReference>
<dbReference type="HOGENOM" id="CLU_001493_0_2_0"/>
<dbReference type="InParanoid" id="Q3Z9C5"/>
<dbReference type="Proteomes" id="UP000008289">
    <property type="component" value="Chromosome"/>
</dbReference>
<dbReference type="GO" id="GO:0005829">
    <property type="term" value="C:cytosol"/>
    <property type="evidence" value="ECO:0007669"/>
    <property type="project" value="TreeGrafter"/>
</dbReference>
<dbReference type="GO" id="GO:0002161">
    <property type="term" value="F:aminoacyl-tRNA deacylase activity"/>
    <property type="evidence" value="ECO:0007669"/>
    <property type="project" value="InterPro"/>
</dbReference>
<dbReference type="GO" id="GO:0005524">
    <property type="term" value="F:ATP binding"/>
    <property type="evidence" value="ECO:0007669"/>
    <property type="project" value="UniProtKB-UniRule"/>
</dbReference>
<dbReference type="GO" id="GO:0004832">
    <property type="term" value="F:valine-tRNA ligase activity"/>
    <property type="evidence" value="ECO:0007669"/>
    <property type="project" value="UniProtKB-UniRule"/>
</dbReference>
<dbReference type="GO" id="GO:0006438">
    <property type="term" value="P:valyl-tRNA aminoacylation"/>
    <property type="evidence" value="ECO:0007669"/>
    <property type="project" value="UniProtKB-UniRule"/>
</dbReference>
<dbReference type="CDD" id="cd07962">
    <property type="entry name" value="Anticodon_Ia_Val"/>
    <property type="match status" value="1"/>
</dbReference>
<dbReference type="CDD" id="cd00817">
    <property type="entry name" value="ValRS_core"/>
    <property type="match status" value="1"/>
</dbReference>
<dbReference type="FunFam" id="1.10.287.380:FF:000001">
    <property type="entry name" value="Valine--tRNA ligase"/>
    <property type="match status" value="1"/>
</dbReference>
<dbReference type="FunFam" id="1.10.730.10:FF:000014">
    <property type="entry name" value="Valine--tRNA ligase"/>
    <property type="match status" value="1"/>
</dbReference>
<dbReference type="FunFam" id="3.40.50.620:FF:000032">
    <property type="entry name" value="Valine--tRNA ligase"/>
    <property type="match status" value="1"/>
</dbReference>
<dbReference type="FunFam" id="3.40.50.620:FF:000098">
    <property type="entry name" value="Valine--tRNA ligase"/>
    <property type="match status" value="1"/>
</dbReference>
<dbReference type="FunFam" id="3.90.740.10:FF:000008">
    <property type="entry name" value="Valine--tRNA ligase, mitochondrial"/>
    <property type="match status" value="1"/>
</dbReference>
<dbReference type="Gene3D" id="3.40.50.620">
    <property type="entry name" value="HUPs"/>
    <property type="match status" value="2"/>
</dbReference>
<dbReference type="Gene3D" id="1.10.730.10">
    <property type="entry name" value="Isoleucyl-tRNA Synthetase, Domain 1"/>
    <property type="match status" value="1"/>
</dbReference>
<dbReference type="Gene3D" id="1.10.287.380">
    <property type="entry name" value="Valyl-tRNA synthetase, C-terminal domain"/>
    <property type="match status" value="1"/>
</dbReference>
<dbReference type="Gene3D" id="3.90.740.10">
    <property type="entry name" value="Valyl/Leucyl/Isoleucyl-tRNA synthetase, editing domain"/>
    <property type="match status" value="1"/>
</dbReference>
<dbReference type="HAMAP" id="MF_02004">
    <property type="entry name" value="Val_tRNA_synth_type1"/>
    <property type="match status" value="1"/>
</dbReference>
<dbReference type="InterPro" id="IPR001412">
    <property type="entry name" value="aa-tRNA-synth_I_CS"/>
</dbReference>
<dbReference type="InterPro" id="IPR002300">
    <property type="entry name" value="aa-tRNA-synth_Ia"/>
</dbReference>
<dbReference type="InterPro" id="IPR033705">
    <property type="entry name" value="Anticodon_Ia_Val"/>
</dbReference>
<dbReference type="InterPro" id="IPR013155">
    <property type="entry name" value="M/V/L/I-tRNA-synth_anticd-bd"/>
</dbReference>
<dbReference type="InterPro" id="IPR014729">
    <property type="entry name" value="Rossmann-like_a/b/a_fold"/>
</dbReference>
<dbReference type="InterPro" id="IPR010978">
    <property type="entry name" value="tRNA-bd_arm"/>
</dbReference>
<dbReference type="InterPro" id="IPR009080">
    <property type="entry name" value="tRNAsynth_Ia_anticodon-bd"/>
</dbReference>
<dbReference type="InterPro" id="IPR037118">
    <property type="entry name" value="Val-tRNA_synth_C_sf"/>
</dbReference>
<dbReference type="InterPro" id="IPR019499">
    <property type="entry name" value="Val-tRNA_synth_tRNA-bd"/>
</dbReference>
<dbReference type="InterPro" id="IPR009008">
    <property type="entry name" value="Val/Leu/Ile-tRNA-synth_edit"/>
</dbReference>
<dbReference type="InterPro" id="IPR002303">
    <property type="entry name" value="Valyl-tRNA_ligase"/>
</dbReference>
<dbReference type="NCBIfam" id="NF004349">
    <property type="entry name" value="PRK05729.1"/>
    <property type="match status" value="1"/>
</dbReference>
<dbReference type="NCBIfam" id="TIGR00422">
    <property type="entry name" value="valS"/>
    <property type="match status" value="1"/>
</dbReference>
<dbReference type="PANTHER" id="PTHR11946:SF93">
    <property type="entry name" value="VALINE--TRNA LIGASE, CHLOROPLASTIC_MITOCHONDRIAL 2"/>
    <property type="match status" value="1"/>
</dbReference>
<dbReference type="PANTHER" id="PTHR11946">
    <property type="entry name" value="VALYL-TRNA SYNTHETASES"/>
    <property type="match status" value="1"/>
</dbReference>
<dbReference type="Pfam" id="PF08264">
    <property type="entry name" value="Anticodon_1"/>
    <property type="match status" value="1"/>
</dbReference>
<dbReference type="Pfam" id="PF00133">
    <property type="entry name" value="tRNA-synt_1"/>
    <property type="match status" value="1"/>
</dbReference>
<dbReference type="Pfam" id="PF10458">
    <property type="entry name" value="Val_tRNA-synt_C"/>
    <property type="match status" value="1"/>
</dbReference>
<dbReference type="PRINTS" id="PR00986">
    <property type="entry name" value="TRNASYNTHVAL"/>
</dbReference>
<dbReference type="SUPFAM" id="SSF47323">
    <property type="entry name" value="Anticodon-binding domain of a subclass of class I aminoacyl-tRNA synthetases"/>
    <property type="match status" value="1"/>
</dbReference>
<dbReference type="SUPFAM" id="SSF52374">
    <property type="entry name" value="Nucleotidylyl transferase"/>
    <property type="match status" value="1"/>
</dbReference>
<dbReference type="SUPFAM" id="SSF46589">
    <property type="entry name" value="tRNA-binding arm"/>
    <property type="match status" value="1"/>
</dbReference>
<dbReference type="SUPFAM" id="SSF50677">
    <property type="entry name" value="ValRS/IleRS/LeuRS editing domain"/>
    <property type="match status" value="1"/>
</dbReference>
<dbReference type="PROSITE" id="PS00178">
    <property type="entry name" value="AA_TRNA_LIGASE_I"/>
    <property type="match status" value="1"/>
</dbReference>
<reference key="1">
    <citation type="journal article" date="2005" name="Science">
        <title>Genome sequence of the PCE-dechlorinating bacterium Dehalococcoides ethenogenes.</title>
        <authorList>
            <person name="Seshadri R."/>
            <person name="Adrian L."/>
            <person name="Fouts D.E."/>
            <person name="Eisen J.A."/>
            <person name="Phillippy A.M."/>
            <person name="Methe B.A."/>
            <person name="Ward N.L."/>
            <person name="Nelson W.C."/>
            <person name="DeBoy R.T."/>
            <person name="Khouri H.M."/>
            <person name="Kolonay J.F."/>
            <person name="Dodson R.J."/>
            <person name="Daugherty S.C."/>
            <person name="Brinkac L.M."/>
            <person name="Sullivan S.A."/>
            <person name="Madupu R."/>
            <person name="Nelson K.E."/>
            <person name="Kang K.H."/>
            <person name="Impraim M."/>
            <person name="Tran K."/>
            <person name="Robinson J.M."/>
            <person name="Forberger H.A."/>
            <person name="Fraser C.M."/>
            <person name="Zinder S.H."/>
            <person name="Heidelberg J.F."/>
        </authorList>
    </citation>
    <scope>NUCLEOTIDE SEQUENCE [LARGE SCALE GENOMIC DNA]</scope>
    <source>
        <strain>ATCC BAA-2266 / KCTC 15142 / 195</strain>
    </source>
</reference>
<keyword id="KW-0030">Aminoacyl-tRNA synthetase</keyword>
<keyword id="KW-0067">ATP-binding</keyword>
<keyword id="KW-0175">Coiled coil</keyword>
<keyword id="KW-0963">Cytoplasm</keyword>
<keyword id="KW-0436">Ligase</keyword>
<keyword id="KW-0547">Nucleotide-binding</keyword>
<keyword id="KW-0648">Protein biosynthesis</keyword>
<evidence type="ECO:0000255" key="1">
    <source>
        <dbReference type="HAMAP-Rule" id="MF_02004"/>
    </source>
</evidence>
<gene>
    <name evidence="1" type="primary">valS</name>
    <name type="ordered locus">DET0430</name>
</gene>
<protein>
    <recommendedName>
        <fullName evidence="1">Valine--tRNA ligase</fullName>
        <ecNumber evidence="1">6.1.1.9</ecNumber>
    </recommendedName>
    <alternativeName>
        <fullName evidence="1">Valyl-tRNA synthetase</fullName>
        <shortName evidence="1">ValRS</shortName>
    </alternativeName>
</protein>
<accession>Q3Z9C5</accession>
<sequence>MAQCSGLPEMAKAYEAAEVEKKWYQYWMEKGYFKPNPDSDKKPFVIIMPPPNVTGELHLGHALTATLEDIMIRWHRMLGEPALWLPGADHAGIAAQVVVERMLAKQGKTRQELGRELFLEKMWEWVNPCRERIRHQHMRLGASCDWDRETFTLDPGPVKAVREIFTNLYQKGLIYRGERIINWCPRCATAVSDLEVDHKDLAGHIWHLRYPLEDGSGFVTVATTRPETMLGDTAVAVHPDDARYTGMVGKNVLLPIMNRRIPVIADEAVDMAFGTGAVKVTPAHDPNDFEMGLRHSLPMITIQNRDTTMNENAGPCSGMTAKACREYVVSELKSLGLLLKIEDYTHSVGHCQRCSAVIEPMVSKQWFVKMEPLAKPALEAVNSGRIQILPERFTKVYQNWMENIRDWCISRQLWWGHRIPVWYCPCGEMIVSKEDPTACPKCGSTKLEQDPDVLDTWFSSGLWPHSTLGWPDQTEDLKRFYPGSVLETAYDIIFFWVARMIVMGIEDMKEVPFRTVYLHGLIRDDKGEKMSKTKGNVIDPLKVIDQYGTDALRFAVTFGTSPGNDSKLGQTKLEAARNFVNKLWNASRFVIMNLGEEKELLPEAGLPLEDRWILSRMNRVTADVIRLMEEFQFGEAQRVLQDFVWGEFCDWYIELAKVRLRDEASVSPRPVLVKVLSTILRLLHPYMPFITEELWSYLRPYLPKSLGETDIIVAPFPQADETCFDEQAESIMGSLVEVVRSLRNLRAEHNVEISRYIQANIYAGDMAEVLSNYLGAVETLSRSRPVNILPGHYSGASTATEVVLVLNGIEVVVPMSTMVDLEAEAKRVEAEIAELETQIERLSARLSDTQFLAKAPQAVVDKERTKLEGYIEKVSRLKAV</sequence>
<comment type="function">
    <text evidence="1">Catalyzes the attachment of valine to tRNA(Val). As ValRS can inadvertently accommodate and process structurally similar amino acids such as threonine, to avoid such errors, it has a 'posttransfer' editing activity that hydrolyzes mischarged Thr-tRNA(Val) in a tRNA-dependent manner.</text>
</comment>
<comment type="catalytic activity">
    <reaction evidence="1">
        <text>tRNA(Val) + L-valine + ATP = L-valyl-tRNA(Val) + AMP + diphosphate</text>
        <dbReference type="Rhea" id="RHEA:10704"/>
        <dbReference type="Rhea" id="RHEA-COMP:9672"/>
        <dbReference type="Rhea" id="RHEA-COMP:9708"/>
        <dbReference type="ChEBI" id="CHEBI:30616"/>
        <dbReference type="ChEBI" id="CHEBI:33019"/>
        <dbReference type="ChEBI" id="CHEBI:57762"/>
        <dbReference type="ChEBI" id="CHEBI:78442"/>
        <dbReference type="ChEBI" id="CHEBI:78537"/>
        <dbReference type="ChEBI" id="CHEBI:456215"/>
        <dbReference type="EC" id="6.1.1.9"/>
    </reaction>
</comment>
<comment type="subunit">
    <text evidence="1">Monomer.</text>
</comment>
<comment type="subcellular location">
    <subcellularLocation>
        <location evidence="1">Cytoplasm</location>
    </subcellularLocation>
</comment>
<comment type="domain">
    <text evidence="1">ValRS has two distinct active sites: one for aminoacylation and one for editing. The misactivated threonine is translocated from the active site to the editing site.</text>
</comment>
<comment type="domain">
    <text evidence="1">The C-terminal coiled-coil domain is crucial for aminoacylation activity.</text>
</comment>
<comment type="similarity">
    <text evidence="1">Belongs to the class-I aminoacyl-tRNA synthetase family. ValS type 1 subfamily.</text>
</comment>
<name>SYV_DEHM1</name>
<proteinExistence type="inferred from homology"/>
<organism>
    <name type="scientific">Dehalococcoides mccartyi (strain ATCC BAA-2266 / KCTC 15142 / 195)</name>
    <name type="common">Dehalococcoides ethenogenes (strain 195)</name>
    <dbReference type="NCBI Taxonomy" id="243164"/>
    <lineage>
        <taxon>Bacteria</taxon>
        <taxon>Bacillati</taxon>
        <taxon>Chloroflexota</taxon>
        <taxon>Dehalococcoidia</taxon>
        <taxon>Dehalococcoidales</taxon>
        <taxon>Dehalococcoidaceae</taxon>
        <taxon>Dehalococcoides</taxon>
    </lineage>
</organism>